<dbReference type="EC" id="6.1.1.1" evidence="1"/>
<dbReference type="EMBL" id="CP000921">
    <property type="protein sequence ID" value="ACO22298.1"/>
    <property type="molecule type" value="Genomic_DNA"/>
</dbReference>
<dbReference type="RefSeq" id="WP_000546881.1">
    <property type="nucleotide sequence ID" value="NC_012469.1"/>
</dbReference>
<dbReference type="SMR" id="C1CU03"/>
<dbReference type="GeneID" id="45652666"/>
<dbReference type="KEGG" id="snt:SPT_2109"/>
<dbReference type="HOGENOM" id="CLU_024003_0_3_9"/>
<dbReference type="GO" id="GO:0005829">
    <property type="term" value="C:cytosol"/>
    <property type="evidence" value="ECO:0007669"/>
    <property type="project" value="TreeGrafter"/>
</dbReference>
<dbReference type="GO" id="GO:0005524">
    <property type="term" value="F:ATP binding"/>
    <property type="evidence" value="ECO:0007669"/>
    <property type="project" value="UniProtKB-UniRule"/>
</dbReference>
<dbReference type="GO" id="GO:0003723">
    <property type="term" value="F:RNA binding"/>
    <property type="evidence" value="ECO:0007669"/>
    <property type="project" value="UniProtKB-KW"/>
</dbReference>
<dbReference type="GO" id="GO:0004831">
    <property type="term" value="F:tyrosine-tRNA ligase activity"/>
    <property type="evidence" value="ECO:0007669"/>
    <property type="project" value="UniProtKB-UniRule"/>
</dbReference>
<dbReference type="GO" id="GO:0006437">
    <property type="term" value="P:tyrosyl-tRNA aminoacylation"/>
    <property type="evidence" value="ECO:0007669"/>
    <property type="project" value="UniProtKB-UniRule"/>
</dbReference>
<dbReference type="CDD" id="cd00165">
    <property type="entry name" value="S4"/>
    <property type="match status" value="1"/>
</dbReference>
<dbReference type="CDD" id="cd00805">
    <property type="entry name" value="TyrRS_core"/>
    <property type="match status" value="1"/>
</dbReference>
<dbReference type="FunFam" id="1.10.240.10:FF:000001">
    <property type="entry name" value="Tyrosine--tRNA ligase"/>
    <property type="match status" value="1"/>
</dbReference>
<dbReference type="FunFam" id="3.10.290.10:FF:000012">
    <property type="entry name" value="Tyrosine--tRNA ligase"/>
    <property type="match status" value="1"/>
</dbReference>
<dbReference type="FunFam" id="3.40.50.620:FF:000008">
    <property type="entry name" value="Tyrosine--tRNA ligase"/>
    <property type="match status" value="1"/>
</dbReference>
<dbReference type="Gene3D" id="3.40.50.620">
    <property type="entry name" value="HUPs"/>
    <property type="match status" value="1"/>
</dbReference>
<dbReference type="Gene3D" id="3.10.290.10">
    <property type="entry name" value="RNA-binding S4 domain"/>
    <property type="match status" value="1"/>
</dbReference>
<dbReference type="Gene3D" id="1.10.240.10">
    <property type="entry name" value="Tyrosyl-Transfer RNA Synthetase"/>
    <property type="match status" value="1"/>
</dbReference>
<dbReference type="HAMAP" id="MF_02006">
    <property type="entry name" value="Tyr_tRNA_synth_type1"/>
    <property type="match status" value="1"/>
</dbReference>
<dbReference type="InterPro" id="IPR001412">
    <property type="entry name" value="aa-tRNA-synth_I_CS"/>
</dbReference>
<dbReference type="InterPro" id="IPR002305">
    <property type="entry name" value="aa-tRNA-synth_Ic"/>
</dbReference>
<dbReference type="InterPro" id="IPR014729">
    <property type="entry name" value="Rossmann-like_a/b/a_fold"/>
</dbReference>
<dbReference type="InterPro" id="IPR002942">
    <property type="entry name" value="S4_RNA-bd"/>
</dbReference>
<dbReference type="InterPro" id="IPR036986">
    <property type="entry name" value="S4_RNA-bd_sf"/>
</dbReference>
<dbReference type="InterPro" id="IPR054608">
    <property type="entry name" value="SYY-like_C"/>
</dbReference>
<dbReference type="InterPro" id="IPR002307">
    <property type="entry name" value="Tyr-tRNA-ligase"/>
</dbReference>
<dbReference type="InterPro" id="IPR024088">
    <property type="entry name" value="Tyr-tRNA-ligase_bac-type"/>
</dbReference>
<dbReference type="InterPro" id="IPR024107">
    <property type="entry name" value="Tyr-tRNA-ligase_bac_1"/>
</dbReference>
<dbReference type="NCBIfam" id="TIGR00234">
    <property type="entry name" value="tyrS"/>
    <property type="match status" value="1"/>
</dbReference>
<dbReference type="PANTHER" id="PTHR11766:SF0">
    <property type="entry name" value="TYROSINE--TRNA LIGASE, MITOCHONDRIAL"/>
    <property type="match status" value="1"/>
</dbReference>
<dbReference type="PANTHER" id="PTHR11766">
    <property type="entry name" value="TYROSYL-TRNA SYNTHETASE"/>
    <property type="match status" value="1"/>
</dbReference>
<dbReference type="Pfam" id="PF22421">
    <property type="entry name" value="SYY_C-terminal"/>
    <property type="match status" value="1"/>
</dbReference>
<dbReference type="Pfam" id="PF00579">
    <property type="entry name" value="tRNA-synt_1b"/>
    <property type="match status" value="1"/>
</dbReference>
<dbReference type="PRINTS" id="PR01040">
    <property type="entry name" value="TRNASYNTHTYR"/>
</dbReference>
<dbReference type="SMART" id="SM00363">
    <property type="entry name" value="S4"/>
    <property type="match status" value="1"/>
</dbReference>
<dbReference type="SUPFAM" id="SSF55174">
    <property type="entry name" value="Alpha-L RNA-binding motif"/>
    <property type="match status" value="1"/>
</dbReference>
<dbReference type="SUPFAM" id="SSF52374">
    <property type="entry name" value="Nucleotidylyl transferase"/>
    <property type="match status" value="1"/>
</dbReference>
<dbReference type="PROSITE" id="PS00178">
    <property type="entry name" value="AA_TRNA_LIGASE_I"/>
    <property type="match status" value="1"/>
</dbReference>
<dbReference type="PROSITE" id="PS50889">
    <property type="entry name" value="S4"/>
    <property type="match status" value="1"/>
</dbReference>
<accession>C1CU03</accession>
<evidence type="ECO:0000255" key="1">
    <source>
        <dbReference type="HAMAP-Rule" id="MF_02006"/>
    </source>
</evidence>
<sequence length="418" mass="47490">MHIFDELKERGLIFQTTDEEALRKALEEGQVSYYTGYDPTADSLHLGHLVAILTSRRLQLAGHKPYALVGGATGLIGDPSFKDAERSLQTKDTVDGWVKSIQGQLSRFLDFENGENKAVMVNNYDWFGSISFIDFLRDIGKYFTVNYMMSKESVKKRIETGISYTEFAYQIMQGYDFFVLNQDHNVTLQIGGSDQWGNMTAGTELLRRKADKTGHVITVPLITDATGKKFGKSEGNAVWLNPEKTSPYEMYQFWMNVMDADAVRFLKIFTFLSLDEIEDIRKQFEAAPHERLAQKVLAREVVTLVHGEEAYKEALNITEQLFAGNIKNLSVKELKQGLRGVPNYQVQADEHNNIVELLVSSGIVNSKRQAREDVQNGAIYVNGDRIQDLDYVLSDADKLENELTVIRRGKKKYFVLTY</sequence>
<comment type="function">
    <text evidence="1">Catalyzes the attachment of tyrosine to tRNA(Tyr) in a two-step reaction: tyrosine is first activated by ATP to form Tyr-AMP and then transferred to the acceptor end of tRNA(Tyr).</text>
</comment>
<comment type="catalytic activity">
    <reaction evidence="1">
        <text>tRNA(Tyr) + L-tyrosine + ATP = L-tyrosyl-tRNA(Tyr) + AMP + diphosphate + H(+)</text>
        <dbReference type="Rhea" id="RHEA:10220"/>
        <dbReference type="Rhea" id="RHEA-COMP:9706"/>
        <dbReference type="Rhea" id="RHEA-COMP:9707"/>
        <dbReference type="ChEBI" id="CHEBI:15378"/>
        <dbReference type="ChEBI" id="CHEBI:30616"/>
        <dbReference type="ChEBI" id="CHEBI:33019"/>
        <dbReference type="ChEBI" id="CHEBI:58315"/>
        <dbReference type="ChEBI" id="CHEBI:78442"/>
        <dbReference type="ChEBI" id="CHEBI:78536"/>
        <dbReference type="ChEBI" id="CHEBI:456215"/>
        <dbReference type="EC" id="6.1.1.1"/>
    </reaction>
</comment>
<comment type="subunit">
    <text evidence="1">Homodimer.</text>
</comment>
<comment type="subcellular location">
    <subcellularLocation>
        <location evidence="1">Cytoplasm</location>
    </subcellularLocation>
</comment>
<comment type="similarity">
    <text evidence="1">Belongs to the class-I aminoacyl-tRNA synthetase family. TyrS type 1 subfamily.</text>
</comment>
<proteinExistence type="inferred from homology"/>
<organism>
    <name type="scientific">Streptococcus pneumoniae (strain Taiwan19F-14)</name>
    <dbReference type="NCBI Taxonomy" id="487213"/>
    <lineage>
        <taxon>Bacteria</taxon>
        <taxon>Bacillati</taxon>
        <taxon>Bacillota</taxon>
        <taxon>Bacilli</taxon>
        <taxon>Lactobacillales</taxon>
        <taxon>Streptococcaceae</taxon>
        <taxon>Streptococcus</taxon>
    </lineage>
</organism>
<gene>
    <name evidence="1" type="primary">tyrS</name>
    <name type="ordered locus">SPT_2109</name>
</gene>
<feature type="chain" id="PRO_1000189343" description="Tyrosine--tRNA ligase">
    <location>
        <begin position="1"/>
        <end position="418"/>
    </location>
</feature>
<feature type="domain" description="S4 RNA-binding" evidence="1">
    <location>
        <begin position="352"/>
        <end position="418"/>
    </location>
</feature>
<feature type="short sequence motif" description="'HIGH' region">
    <location>
        <begin position="39"/>
        <end position="48"/>
    </location>
</feature>
<feature type="short sequence motif" description="'KMSKS' region">
    <location>
        <begin position="229"/>
        <end position="233"/>
    </location>
</feature>
<feature type="binding site" evidence="1">
    <location>
        <position position="34"/>
    </location>
    <ligand>
        <name>L-tyrosine</name>
        <dbReference type="ChEBI" id="CHEBI:58315"/>
    </ligand>
</feature>
<feature type="binding site" evidence="1">
    <location>
        <position position="169"/>
    </location>
    <ligand>
        <name>L-tyrosine</name>
        <dbReference type="ChEBI" id="CHEBI:58315"/>
    </ligand>
</feature>
<feature type="binding site" evidence="1">
    <location>
        <position position="173"/>
    </location>
    <ligand>
        <name>L-tyrosine</name>
        <dbReference type="ChEBI" id="CHEBI:58315"/>
    </ligand>
</feature>
<feature type="binding site" evidence="1">
    <location>
        <position position="232"/>
    </location>
    <ligand>
        <name>ATP</name>
        <dbReference type="ChEBI" id="CHEBI:30616"/>
    </ligand>
</feature>
<keyword id="KW-0030">Aminoacyl-tRNA synthetase</keyword>
<keyword id="KW-0067">ATP-binding</keyword>
<keyword id="KW-0963">Cytoplasm</keyword>
<keyword id="KW-0436">Ligase</keyword>
<keyword id="KW-0547">Nucleotide-binding</keyword>
<keyword id="KW-0648">Protein biosynthesis</keyword>
<keyword id="KW-0694">RNA-binding</keyword>
<name>SYY_STRZT</name>
<reference key="1">
    <citation type="journal article" date="2010" name="Genome Biol.">
        <title>Structure and dynamics of the pan-genome of Streptococcus pneumoniae and closely related species.</title>
        <authorList>
            <person name="Donati C."/>
            <person name="Hiller N.L."/>
            <person name="Tettelin H."/>
            <person name="Muzzi A."/>
            <person name="Croucher N.J."/>
            <person name="Angiuoli S.V."/>
            <person name="Oggioni M."/>
            <person name="Dunning Hotopp J.C."/>
            <person name="Hu F.Z."/>
            <person name="Riley D.R."/>
            <person name="Covacci A."/>
            <person name="Mitchell T.J."/>
            <person name="Bentley S.D."/>
            <person name="Kilian M."/>
            <person name="Ehrlich G.D."/>
            <person name="Rappuoli R."/>
            <person name="Moxon E.R."/>
            <person name="Masignani V."/>
        </authorList>
    </citation>
    <scope>NUCLEOTIDE SEQUENCE [LARGE SCALE GENOMIC DNA]</scope>
    <source>
        <strain>Taiwan19F-14</strain>
    </source>
</reference>
<protein>
    <recommendedName>
        <fullName evidence="1">Tyrosine--tRNA ligase</fullName>
        <ecNumber evidence="1">6.1.1.1</ecNumber>
    </recommendedName>
    <alternativeName>
        <fullName evidence="1">Tyrosyl-tRNA synthetase</fullName>
        <shortName evidence="1">TyrRS</shortName>
    </alternativeName>
</protein>